<organism>
    <name type="scientific">Xenopus laevis</name>
    <name type="common">African clawed frog</name>
    <dbReference type="NCBI Taxonomy" id="8355"/>
    <lineage>
        <taxon>Eukaryota</taxon>
        <taxon>Metazoa</taxon>
        <taxon>Chordata</taxon>
        <taxon>Craniata</taxon>
        <taxon>Vertebrata</taxon>
        <taxon>Euteleostomi</taxon>
        <taxon>Amphibia</taxon>
        <taxon>Batrachia</taxon>
        <taxon>Anura</taxon>
        <taxon>Pipoidea</taxon>
        <taxon>Pipidae</taxon>
        <taxon>Xenopodinae</taxon>
        <taxon>Xenopus</taxon>
        <taxon>Xenopus</taxon>
    </lineage>
</organism>
<dbReference type="EMBL" id="AY207367">
    <property type="protein sequence ID" value="AAO34130.1"/>
    <property type="molecule type" value="mRNA"/>
</dbReference>
<dbReference type="EMBL" id="AY999019">
    <property type="protein sequence ID" value="AAY15242.1"/>
    <property type="molecule type" value="mRNA"/>
</dbReference>
<dbReference type="EMBL" id="AY312176">
    <property type="protein sequence ID" value="AAQ82670.1"/>
    <property type="molecule type" value="mRNA"/>
</dbReference>
<dbReference type="RefSeq" id="NP_001084420.1">
    <property type="nucleotide sequence ID" value="NM_001090951.1"/>
</dbReference>
<dbReference type="PDB" id="2K2W">
    <property type="method" value="NMR"/>
    <property type="chains" value="A=215-324"/>
</dbReference>
<dbReference type="PDBsum" id="2K2W"/>
<dbReference type="SMR" id="Q6XV80"/>
<dbReference type="GeneID" id="403373"/>
<dbReference type="KEGG" id="xla:403373"/>
<dbReference type="AGR" id="Xenbase:XB-GENE-943040"/>
<dbReference type="CTD" id="403373"/>
<dbReference type="Xenbase" id="XB-GENE-943040">
    <property type="gene designation" value="nbn.L"/>
</dbReference>
<dbReference type="OrthoDB" id="552194at2759"/>
<dbReference type="EvolutionaryTrace" id="Q6XV80"/>
<dbReference type="Proteomes" id="UP000186698">
    <property type="component" value="Chromosome 6L"/>
</dbReference>
<dbReference type="Bgee" id="403373">
    <property type="expression patterns" value="Expressed in pancreas and 19 other cell types or tissues"/>
</dbReference>
<dbReference type="GO" id="GO:0000781">
    <property type="term" value="C:chromosome, telomeric region"/>
    <property type="evidence" value="ECO:0000250"/>
    <property type="project" value="UniProtKB"/>
</dbReference>
<dbReference type="GO" id="GO:0030870">
    <property type="term" value="C:Mre11 complex"/>
    <property type="evidence" value="ECO:0000314"/>
    <property type="project" value="UniProtKB"/>
</dbReference>
<dbReference type="GO" id="GO:0042405">
    <property type="term" value="C:nuclear inclusion body"/>
    <property type="evidence" value="ECO:0000250"/>
    <property type="project" value="UniProtKB"/>
</dbReference>
<dbReference type="GO" id="GO:0016605">
    <property type="term" value="C:PML body"/>
    <property type="evidence" value="ECO:0007669"/>
    <property type="project" value="UniProtKB-SubCell"/>
</dbReference>
<dbReference type="GO" id="GO:0035861">
    <property type="term" value="C:site of double-strand break"/>
    <property type="evidence" value="ECO:0000250"/>
    <property type="project" value="UniProtKB"/>
</dbReference>
<dbReference type="GO" id="GO:0140463">
    <property type="term" value="F:chromatin-protein adaptor activity"/>
    <property type="evidence" value="ECO:0000250"/>
    <property type="project" value="UniProtKB"/>
</dbReference>
<dbReference type="GO" id="GO:0003684">
    <property type="term" value="F:damaged DNA binding"/>
    <property type="evidence" value="ECO:0000318"/>
    <property type="project" value="GO_Central"/>
</dbReference>
<dbReference type="GO" id="GO:0140297">
    <property type="term" value="F:DNA-binding transcription factor binding"/>
    <property type="evidence" value="ECO:0000250"/>
    <property type="project" value="UniProtKB"/>
</dbReference>
<dbReference type="GO" id="GO:0140031">
    <property type="term" value="F:phosphorylation-dependent protein binding"/>
    <property type="evidence" value="ECO:0000250"/>
    <property type="project" value="UniProtKB"/>
</dbReference>
<dbReference type="GO" id="GO:0043539">
    <property type="term" value="F:protein serine/threonine kinase activator activity"/>
    <property type="evidence" value="ECO:0000250"/>
    <property type="project" value="UniProtKB"/>
</dbReference>
<dbReference type="GO" id="GO:0000729">
    <property type="term" value="P:DNA double-strand break processing"/>
    <property type="evidence" value="ECO:0000250"/>
    <property type="project" value="UniProtKB"/>
</dbReference>
<dbReference type="GO" id="GO:0110025">
    <property type="term" value="P:DNA strand resection involved in replication fork processing"/>
    <property type="evidence" value="ECO:0000314"/>
    <property type="project" value="UniProtKB"/>
</dbReference>
<dbReference type="GO" id="GO:0006302">
    <property type="term" value="P:double-strand break repair"/>
    <property type="evidence" value="ECO:0000250"/>
    <property type="project" value="UniProtKB"/>
</dbReference>
<dbReference type="GO" id="GO:0000724">
    <property type="term" value="P:double-strand break repair via homologous recombination"/>
    <property type="evidence" value="ECO:0000318"/>
    <property type="project" value="GO_Central"/>
</dbReference>
<dbReference type="GO" id="GO:0045190">
    <property type="term" value="P:isotype switching"/>
    <property type="evidence" value="ECO:0000250"/>
    <property type="project" value="UniProtKB"/>
</dbReference>
<dbReference type="GO" id="GO:0051321">
    <property type="term" value="P:meiotic cell cycle"/>
    <property type="evidence" value="ECO:0007669"/>
    <property type="project" value="UniProtKB-KW"/>
</dbReference>
<dbReference type="GO" id="GO:0051310">
    <property type="term" value="P:metaphase chromosome alignment"/>
    <property type="evidence" value="ECO:0000314"/>
    <property type="project" value="UniProtKB"/>
</dbReference>
<dbReference type="GO" id="GO:0007095">
    <property type="term" value="P:mitotic G2 DNA damage checkpoint signaling"/>
    <property type="evidence" value="ECO:0000250"/>
    <property type="project" value="UniProtKB"/>
</dbReference>
<dbReference type="GO" id="GO:0031848">
    <property type="term" value="P:protection from non-homologous end joining at telomere"/>
    <property type="evidence" value="ECO:0000250"/>
    <property type="project" value="UniProtKB"/>
</dbReference>
<dbReference type="GO" id="GO:1990166">
    <property type="term" value="P:protein localization to site of double-strand break"/>
    <property type="evidence" value="ECO:0000250"/>
    <property type="project" value="UniProtKB"/>
</dbReference>
<dbReference type="GO" id="GO:0062176">
    <property type="term" value="P:R-loop processing"/>
    <property type="evidence" value="ECO:0000250"/>
    <property type="project" value="UniProtKB"/>
</dbReference>
<dbReference type="GO" id="GO:0048145">
    <property type="term" value="P:regulation of fibroblast proliferation"/>
    <property type="evidence" value="ECO:0000250"/>
    <property type="project" value="UniProtKB"/>
</dbReference>
<dbReference type="GO" id="GO:0000723">
    <property type="term" value="P:telomere maintenance"/>
    <property type="evidence" value="ECO:0000250"/>
    <property type="project" value="UniProtKB"/>
</dbReference>
<dbReference type="GO" id="GO:0043247">
    <property type="term" value="P:telomere maintenance in response to DNA damage"/>
    <property type="evidence" value="ECO:0000250"/>
    <property type="project" value="UniProtKB"/>
</dbReference>
<dbReference type="CDD" id="cd17741">
    <property type="entry name" value="BRCT_nibrin"/>
    <property type="match status" value="1"/>
</dbReference>
<dbReference type="CDD" id="cd22667">
    <property type="entry name" value="FHA_NBN"/>
    <property type="match status" value="1"/>
</dbReference>
<dbReference type="FunFam" id="2.60.200.20:FF:000017">
    <property type="entry name" value="Nibrin"/>
    <property type="match status" value="1"/>
</dbReference>
<dbReference type="FunFam" id="3.40.50.10190:FF:000024">
    <property type="entry name" value="Nibrin"/>
    <property type="match status" value="1"/>
</dbReference>
<dbReference type="FunFam" id="3.40.50.10980:FF:000001">
    <property type="entry name" value="Nibrin"/>
    <property type="match status" value="1"/>
</dbReference>
<dbReference type="Gene3D" id="2.60.200.20">
    <property type="match status" value="1"/>
</dbReference>
<dbReference type="Gene3D" id="3.40.50.10190">
    <property type="entry name" value="BRCT domain"/>
    <property type="match status" value="1"/>
</dbReference>
<dbReference type="Gene3D" id="3.40.50.10980">
    <property type="entry name" value="Nibrin, BRCT2 domain"/>
    <property type="match status" value="1"/>
</dbReference>
<dbReference type="InterPro" id="IPR001357">
    <property type="entry name" value="BRCT_dom"/>
</dbReference>
<dbReference type="InterPro" id="IPR036420">
    <property type="entry name" value="BRCT_dom_sf"/>
</dbReference>
<dbReference type="InterPro" id="IPR000253">
    <property type="entry name" value="FHA_dom"/>
</dbReference>
<dbReference type="InterPro" id="IPR040227">
    <property type="entry name" value="Nibrin-rel"/>
</dbReference>
<dbReference type="InterPro" id="IPR032429">
    <property type="entry name" value="Nibrin_BRCT2"/>
</dbReference>
<dbReference type="InterPro" id="IPR043014">
    <property type="entry name" value="Nibrin_BRCT2_sf"/>
</dbReference>
<dbReference type="InterPro" id="IPR013908">
    <property type="entry name" value="Nibrin_C"/>
</dbReference>
<dbReference type="InterPro" id="IPR016592">
    <property type="entry name" value="Nibrin_met"/>
</dbReference>
<dbReference type="InterPro" id="IPR008984">
    <property type="entry name" value="SMAD_FHA_dom_sf"/>
</dbReference>
<dbReference type="PANTHER" id="PTHR12162:SF0">
    <property type="entry name" value="NIBRIN"/>
    <property type="match status" value="1"/>
</dbReference>
<dbReference type="PANTHER" id="PTHR12162">
    <property type="entry name" value="NIBRIN-RELATED"/>
    <property type="match status" value="1"/>
</dbReference>
<dbReference type="Pfam" id="PF00533">
    <property type="entry name" value="BRCT"/>
    <property type="match status" value="1"/>
</dbReference>
<dbReference type="Pfam" id="PF00498">
    <property type="entry name" value="FHA"/>
    <property type="match status" value="1"/>
</dbReference>
<dbReference type="Pfam" id="PF08599">
    <property type="entry name" value="Nbs1_C"/>
    <property type="match status" value="1"/>
</dbReference>
<dbReference type="Pfam" id="PF16508">
    <property type="entry name" value="NIBRIN_BRCT_II"/>
    <property type="match status" value="1"/>
</dbReference>
<dbReference type="PIRSF" id="PIRSF011869">
    <property type="entry name" value="Nibrin_animal"/>
    <property type="match status" value="1"/>
</dbReference>
<dbReference type="SMART" id="SM00240">
    <property type="entry name" value="FHA"/>
    <property type="match status" value="1"/>
</dbReference>
<dbReference type="SMART" id="SM01348">
    <property type="entry name" value="Nbs1_C"/>
    <property type="match status" value="1"/>
</dbReference>
<dbReference type="SUPFAM" id="SSF52113">
    <property type="entry name" value="BRCT domain"/>
    <property type="match status" value="1"/>
</dbReference>
<dbReference type="SUPFAM" id="SSF49879">
    <property type="entry name" value="SMAD/FHA domain"/>
    <property type="match status" value="1"/>
</dbReference>
<dbReference type="PROSITE" id="PS50006">
    <property type="entry name" value="FHA_DOMAIN"/>
    <property type="match status" value="1"/>
</dbReference>
<feature type="chain" id="PRO_0000460316" description="Nibrin">
    <location>
        <begin position="1"/>
        <end position="763"/>
    </location>
</feature>
<feature type="domain" description="FHA" evidence="3">
    <location>
        <begin position="22"/>
        <end position="81"/>
    </location>
</feature>
<feature type="domain" description="BRCT 1" evidence="2">
    <location>
        <begin position="102"/>
        <end position="179"/>
    </location>
</feature>
<feature type="domain" description="BRCT 2" evidence="6">
    <location>
        <begin position="215"/>
        <end position="324"/>
    </location>
</feature>
<feature type="region of interest" description="Disordered" evidence="4">
    <location>
        <begin position="389"/>
        <end position="496"/>
    </location>
</feature>
<feature type="region of interest" description="Disordered" evidence="4">
    <location>
        <begin position="535"/>
        <end position="593"/>
    </location>
</feature>
<feature type="region of interest" description="Disordered" evidence="4">
    <location>
        <begin position="738"/>
        <end position="763"/>
    </location>
</feature>
<feature type="short sequence motif" description="Nuclear localization signal" evidence="1">
    <location>
        <begin position="469"/>
        <end position="474"/>
    </location>
</feature>
<feature type="short sequence motif" description="FxF/Y motif" evidence="1">
    <location>
        <begin position="748"/>
        <end position="757"/>
    </location>
</feature>
<feature type="compositionally biased region" description="Basic and acidic residues" evidence="4">
    <location>
        <begin position="423"/>
        <end position="433"/>
    </location>
</feature>
<feature type="compositionally biased region" description="Polar residues" evidence="4">
    <location>
        <begin position="434"/>
        <end position="443"/>
    </location>
</feature>
<feature type="compositionally biased region" description="Basic and acidic residues" evidence="4">
    <location>
        <begin position="473"/>
        <end position="482"/>
    </location>
</feature>
<feature type="compositionally biased region" description="Basic and acidic residues" evidence="4">
    <location>
        <begin position="742"/>
        <end position="752"/>
    </location>
</feature>
<feature type="sequence conflict" description="In Ref. 2; AAQ82670." evidence="11" ref="2">
    <original>H</original>
    <variation>R</variation>
    <location>
        <position position="180"/>
    </location>
</feature>
<feature type="sequence conflict" description="In Ref. 2; AAQ82670." evidence="11" ref="2">
    <original>T</original>
    <variation>N</variation>
    <location>
        <position position="655"/>
    </location>
</feature>
<feature type="strand" evidence="14">
    <location>
        <begin position="224"/>
        <end position="228"/>
    </location>
</feature>
<feature type="helix" evidence="14">
    <location>
        <begin position="233"/>
        <end position="242"/>
    </location>
</feature>
<feature type="strand" evidence="14">
    <location>
        <begin position="246"/>
        <end position="248"/>
    </location>
</feature>
<feature type="helix" evidence="14">
    <location>
        <begin position="253"/>
        <end position="255"/>
    </location>
</feature>
<feature type="helix" evidence="14">
    <location>
        <begin position="258"/>
        <end position="261"/>
    </location>
</feature>
<feature type="strand" evidence="14">
    <location>
        <begin position="265"/>
        <end position="269"/>
    </location>
</feature>
<feature type="helix" evidence="14">
    <location>
        <begin position="272"/>
        <end position="274"/>
    </location>
</feature>
<feature type="helix" evidence="14">
    <location>
        <begin position="277"/>
        <end position="279"/>
    </location>
</feature>
<feature type="turn" evidence="14">
    <location>
        <begin position="280"/>
        <end position="282"/>
    </location>
</feature>
<feature type="helix" evidence="14">
    <location>
        <begin position="289"/>
        <end position="297"/>
    </location>
</feature>
<feature type="strand" evidence="14">
    <location>
        <begin position="301"/>
        <end position="303"/>
    </location>
</feature>
<feature type="helix" evidence="14">
    <location>
        <begin position="304"/>
        <end position="313"/>
    </location>
</feature>
<feature type="turn" evidence="14">
    <location>
        <begin position="316"/>
        <end position="320"/>
    </location>
</feature>
<protein>
    <recommendedName>
        <fullName>Nibrin</fullName>
    </recommendedName>
    <alternativeName>
        <fullName>Nijmegen breakage syndrome protein 1 homolog</fullName>
        <shortName evidence="10">xNBS1</shortName>
    </alternativeName>
</protein>
<accession>Q6XV80</accession>
<accession>Q6EKW1</accession>
<proteinExistence type="evidence at protein level"/>
<reference key="1">
    <citation type="journal article" date="2005" name="Mol. Cell. Biol.">
        <title>ATM activation and its recruitment to damaged DNA require binding to the C-terminus of Nbs1.</title>
        <authorList>
            <person name="You Z."/>
            <person name="Chahwan C."/>
            <person name="Bailis J."/>
            <person name="Hunter T."/>
            <person name="Russell P."/>
        </authorList>
    </citation>
    <scope>NUCLEOTIDE SEQUENCE [MRNA]</scope>
    <scope>FUNCTION</scope>
</reference>
<reference key="2">
    <citation type="journal article" date="2010" name="Nucleic Acids Res.">
        <title>The Mre11/Rad50/Nbs1 complex functions in resection-based DNA end joining in Xenopus laevis.</title>
        <authorList>
            <person name="Taylor E.M."/>
            <person name="Cecillon S.M."/>
            <person name="Bonis A."/>
            <person name="Chapman J.R."/>
            <person name="Povirk L.F."/>
            <person name="Lindsay H.D."/>
        </authorList>
    </citation>
    <scope>NUCLEOTIDE SEQUENCE [MRNA]</scope>
    <scope>FUNCTION</scope>
</reference>
<reference key="3">
    <citation type="submission" date="2002-12" db="EMBL/GenBank/DDBJ databases">
        <title>Xenopus Nijmegen breakage syndrome 1 (nibrin) (xNBS1).</title>
        <authorList>
            <person name="Nishiyama A."/>
            <person name="Ishikawa F."/>
        </authorList>
    </citation>
    <scope>NUCLEOTIDE SEQUENCE [MRNA]</scope>
</reference>
<reference key="4">
    <citation type="journal article" date="2013" name="Mol. Cell">
        <title>The MRN-CtIP pathway is required for metaphase chromosome alignment.</title>
        <authorList>
            <person name="Rozier L."/>
            <person name="Guo Y."/>
            <person name="Peterson S."/>
            <person name="Sato M."/>
            <person name="Baer R."/>
            <person name="Gautier J."/>
            <person name="Mao Y."/>
        </authorList>
    </citation>
    <scope>FUNCTION</scope>
    <scope>IDENTIFICATION IN THE MRN COMPLEX</scope>
</reference>
<reference key="5">
    <citation type="journal article" date="2013" name="Mol. Cell">
        <title>A role for the MRN complex in ATR activation via TOPBP1 recruitment.</title>
        <authorList>
            <person name="Duursma A.M."/>
            <person name="Driscoll R."/>
            <person name="Elias J.E."/>
            <person name="Cimprich K.A."/>
        </authorList>
    </citation>
    <scope>FUNCTION</scope>
    <scope>IDENTIFICATION IN THE MRN COMPLEX</scope>
</reference>
<reference evidence="13" key="6">
    <citation type="journal article" date="2008" name="J. Mol. Biol.">
        <title>Structure of a second BRCT domain identified in the nijmegen breakage syndrome protein Nbs1 and its function in an MDC1-dependent localization of Nbs1 to DNA damage sites.</title>
        <authorList>
            <person name="Xu C."/>
            <person name="Wu L."/>
            <person name="Cui G."/>
            <person name="Botuyan M.V."/>
            <person name="Chen J."/>
            <person name="Mer G."/>
        </authorList>
    </citation>
    <scope>STRUCTURE BY NMR OF 215-324</scope>
</reference>
<gene>
    <name evidence="12" type="primary">nbn.L</name>
    <name type="synonym">nbs1</name>
</gene>
<keyword id="KW-0002">3D-structure</keyword>
<keyword id="KW-0131">Cell cycle</keyword>
<keyword id="KW-0158">Chromosome</keyword>
<keyword id="KW-0227">DNA damage</keyword>
<keyword id="KW-0234">DNA repair</keyword>
<keyword id="KW-0469">Meiosis</keyword>
<keyword id="KW-0539">Nucleus</keyword>
<keyword id="KW-1185">Reference proteome</keyword>
<keyword id="KW-0779">Telomere</keyword>
<sequence>MWRLVAESAAGGTYHFLTGTDYVVGRKNCAILIPEDQSISRCHATLSVSHPSANLGQTNAASVLSIKDSSKYGTTVNGDKMNPAVPRNLKSGDKVTFGVFNSKYRVEYEPLVVCSSCLDNSEKNSLNQNLIHLGGHVLNNWTEKSTHLVMTSIKVTIKTICALICCKPIIKPDYFCELLHAIQEKRPLPDYRSFIPSVDEPSLTPESLDLSENVKRKSIFKDKVFLFLNAKQYKKLSPAVLFGGGKTDLLMGELKDASVLDNPATCVIDVAMTESQLSESQSTQPWITSTLDLLQSKGLRTIPEAEIGLAVINVSTEIYCNPRRRAASGTEAGTSKKMNVLSSTLCQGIAVDETILPAPTLDITAYAANTEPQDQTGTSWMNISGVREVKETPGNSSSHSRSKGCLQKDPKSGSSSNDLRQTLFREDETDTRKNTPSLLPTKSSARDVTKTSQKLQPTKKIDSYFQSLAKKRDRAEDEKEASSSKLPRVETLSSQTLEEKFPPVTQTLEEENFDSDLDMELAMSCDQILNDSMGSKAAMPEDSTVKKRKVPDDHVVEESDVDSDEGIRANAEQNDTKSDINVTKRRKVDSEIEGTKEPTIKPREIGTKAQVKTNSPEMAPAIRKEIEVKKELDIKKEPKSQWEESKFVPDLQGETDALPSRLLLTEFKSLVVSRPVRNNNATSNSSNGKCHNFKKFKKVAYPGAGSFPNIIGGSDLIAHDRKKNAELEQWLRQEVEEQTQQVREESLAEDLFRYNPKPSKRRR</sequence>
<comment type="function">
    <text evidence="1 5 7 8 9">Component of the MRN complex, which plays a central role in double-strand break (DSB) repair, DNA recombination, maintenance of telomere integrity and meiosis (PubMed:19892829, PubMed:23434370). The MRN complex is involved in the repair of DNA double-strand breaks (DSBs) via homologous recombination (HR), an error-free mechanism which primarily occurs during S and G2 phases (PubMed:19892829). The complex (1) mediates the end resection of damaged DNA, which generates proper single-stranded DNA, a key initial steps in HR, and is (2) required for the recruitment of other repair factors and efficient activation of ATM and ATR upon DNA damage (By similarity). The MRN complex possesses single-strand endonuclease activity and double-strand-specific 3'-5' exonuclease activity, which are provided by MRE11, to initiate end resection, which is required for single-strand invasion and recombination (By similarity). Within the MRN complex, nbn acts as a protein-protein adapter, which specifically recognizes and binds phosphorylated proteins, promoting their recruitment to DNA damage sites (By similarity). Recruits mre11 and rad50 components of the MRN complex to DSBs in response to DNA damage (By similarity). Promotes the recruitment of PI3/PI4-kinase family members atm, atr, and probably DNA-PKcs to the DNA damage sites, activating their functions (PubMed:15964794). Mediates the recruitment of phosphorylated rbbp8/CtIP to DSBs, leading to cooperation between the MRN complex and rbbp8/CtIP to initiate end resection (By similarity). The MRN complex promotes recruitment of topbp1 to DNA damage sites (PubMed:23582259). The MRN complex and rbbp8/CtIP are also required for chromosome alignment during metaphase (PubMed:23434370).</text>
</comment>
<comment type="subunit">
    <text evidence="8 9">Component of the MRN complex composed of two heterodimers rad50 and mre11 associated with a single nbn.</text>
</comment>
<comment type="subcellular location">
    <subcellularLocation>
        <location evidence="1">Nucleus</location>
    </subcellularLocation>
    <subcellularLocation>
        <location evidence="1">Chromosome</location>
    </subcellularLocation>
    <subcellularLocation>
        <location evidence="1">Nucleus</location>
        <location evidence="1">PML body</location>
    </subcellularLocation>
    <subcellularLocation>
        <location evidence="1">Chromosome</location>
        <location evidence="1">Telomere</location>
    </subcellularLocation>
    <text evidence="1">Localizes to DNA double-strand breaks (DSBs); recruited to DNA damage sites via association with phosphorylated proteins, such as phosphorylated H2AX.</text>
</comment>
<comment type="domain">
    <text evidence="1">The FHA and BRCT domains specifically recognize and bind phosphorylated proteins.</text>
</comment>
<comment type="domain">
    <text evidence="1">The C-terminal domain contains a MRE11-binding site, and this interaction is required for the nuclear localization of the MRN complex.</text>
</comment>
<comment type="domain">
    <text evidence="1">The FxF/Y motif (also named EEXXXDDL motif) is required for the interaction with ATM and its recruitment to sites of DNA damage and promote the phosphorylation of ATM substrates, leading to the events of DNA damage response.</text>
</comment>
<comment type="similarity">
    <text evidence="11">Belongs to the Nibrin family.</text>
</comment>
<evidence type="ECO:0000250" key="1">
    <source>
        <dbReference type="UniProtKB" id="O60934"/>
    </source>
</evidence>
<evidence type="ECO:0000255" key="2"/>
<evidence type="ECO:0000255" key="3">
    <source>
        <dbReference type="PROSITE-ProRule" id="PRU00086"/>
    </source>
</evidence>
<evidence type="ECO:0000256" key="4">
    <source>
        <dbReference type="SAM" id="MobiDB-lite"/>
    </source>
</evidence>
<evidence type="ECO:0000269" key="5">
    <source>
    </source>
</evidence>
<evidence type="ECO:0000269" key="6">
    <source>
    </source>
</evidence>
<evidence type="ECO:0000269" key="7">
    <source>
    </source>
</evidence>
<evidence type="ECO:0000269" key="8">
    <source>
    </source>
</evidence>
<evidence type="ECO:0000269" key="9">
    <source>
    </source>
</evidence>
<evidence type="ECO:0000303" key="10">
    <source ref="3"/>
</evidence>
<evidence type="ECO:0000305" key="11"/>
<evidence type="ECO:0000312" key="12">
    <source>
        <dbReference type="Xenbase" id="XB-GENE-943040"/>
    </source>
</evidence>
<evidence type="ECO:0007744" key="13">
    <source>
        <dbReference type="PDB" id="2K2W"/>
    </source>
</evidence>
<evidence type="ECO:0007829" key="14">
    <source>
        <dbReference type="PDB" id="2K2W"/>
    </source>
</evidence>
<name>NBN_XENLA</name>